<feature type="chain" id="PRO_0000068545" description="Aminoglycoside N(3)-acetyltransferase III">
    <location>
        <begin position="1"/>
        <end position="286"/>
    </location>
</feature>
<comment type="function">
    <text>Resistance to antibiotics containing the 2-deoxy-streptamine ring including gentamicin, kanamycin, tobramycin, neomycin and apramycin.</text>
</comment>
<comment type="catalytic activity">
    <reaction>
        <text>a 2-deoxystreptamine antibiotic + acetyl-CoA = an N(3)-acetyl-2-deoxystreptamine antibiotic + CoA + H(+)</text>
        <dbReference type="Rhea" id="RHEA:12665"/>
        <dbReference type="ChEBI" id="CHEBI:15378"/>
        <dbReference type="ChEBI" id="CHEBI:57287"/>
        <dbReference type="ChEBI" id="CHEBI:57288"/>
        <dbReference type="ChEBI" id="CHEBI:57921"/>
        <dbReference type="ChEBI" id="CHEBI:77452"/>
        <dbReference type="EC" id="2.3.1.81"/>
    </reaction>
</comment>
<comment type="similarity">
    <text evidence="1">Belongs to the antibiotic N-acetyltransferase family.</text>
</comment>
<evidence type="ECO:0000305" key="1"/>
<sequence length="286" mass="30609">MHTRKAITEAIRKLGVQTGDLLMVHASLKAIGPVEGGAETVVAALRSAVGPTGTVMGYASWDRSPYEETLNGARLDDKARRTWPPFDPATAGTYRGFGLLNQFLVQAPGARRSAHPDASMVAVGPLAETLTEPHELGHALGEGSPVERFVRLGGKALLLGAPLNSVTALHYAEAVADIPNKRWVTYEMPMLGRNGEVAWKTASEYDSNGILDCFAIEGKPDAVETIANAYVKLGRHREGVVGFAQCYLFDAQDIVTFGVTYLEKHFGATPIVPAHEAAQRSCEPSG</sequence>
<keyword id="KW-0012">Acyltransferase</keyword>
<keyword id="KW-0046">Antibiotic resistance</keyword>
<keyword id="KW-0614">Plasmid</keyword>
<keyword id="KW-0808">Transferase</keyword>
<protein>
    <recommendedName>
        <fullName>Aminoglycoside N(3)-acetyltransferase III</fullName>
        <ecNumber>2.3.1.81</ecNumber>
    </recommendedName>
    <alternativeName>
        <fullName>ACC(3)-III</fullName>
    </alternativeName>
    <alternativeName>
        <fullName>Aminocyclitol 3-N-acetyltransferase type III</fullName>
    </alternativeName>
    <alternativeName>
        <fullName>Gentamicin-(3)-N-acetyl-transferase</fullName>
    </alternativeName>
</protein>
<name>AACC3_ENTCL</name>
<geneLocation type="plasmid">
    <name>pJV03</name>
</geneLocation>
<organism>
    <name type="scientific">Enterobacter cloacae</name>
    <dbReference type="NCBI Taxonomy" id="550"/>
    <lineage>
        <taxon>Bacteria</taxon>
        <taxon>Pseudomonadati</taxon>
        <taxon>Pseudomonadota</taxon>
        <taxon>Gammaproteobacteria</taxon>
        <taxon>Enterobacterales</taxon>
        <taxon>Enterobacteriaceae</taxon>
        <taxon>Enterobacter</taxon>
        <taxon>Enterobacter cloacae complex</taxon>
    </lineage>
</organism>
<accession>P0A256</accession>
<accession>P13245</accession>
<dbReference type="EC" id="2.3.1.81"/>
<dbReference type="EMBL" id="X51534">
    <property type="protein sequence ID" value="CAA35913.1"/>
    <property type="molecule type" value="Genomic_DNA"/>
</dbReference>
<dbReference type="PIR" id="S09651">
    <property type="entry name" value="S09651"/>
</dbReference>
<dbReference type="SMR" id="P0A256"/>
<dbReference type="KEGG" id="ag:CAA35913"/>
<dbReference type="GO" id="GO:0046353">
    <property type="term" value="F:aminoglycoside 3-N-acetyltransferase activity"/>
    <property type="evidence" value="ECO:0007669"/>
    <property type="project" value="UniProtKB-EC"/>
</dbReference>
<dbReference type="GO" id="GO:0046677">
    <property type="term" value="P:response to antibiotic"/>
    <property type="evidence" value="ECO:0007669"/>
    <property type="project" value="UniProtKB-KW"/>
</dbReference>
<dbReference type="InterPro" id="IPR003679">
    <property type="entry name" value="Amioglycoside_AcTrfase"/>
</dbReference>
<dbReference type="InterPro" id="IPR028345">
    <property type="entry name" value="Antibiotic_NAT-like"/>
</dbReference>
<dbReference type="NCBIfam" id="NF033082">
    <property type="entry name" value="AAC_3"/>
    <property type="match status" value="1"/>
</dbReference>
<dbReference type="NCBIfam" id="NF033080">
    <property type="entry name" value="AAC_3_II"/>
    <property type="match status" value="1"/>
</dbReference>
<dbReference type="PANTHER" id="PTHR11104">
    <property type="entry name" value="AMINOGLYCOSIDE N3-ACETYLTRANSFERASE"/>
    <property type="match status" value="1"/>
</dbReference>
<dbReference type="PANTHER" id="PTHR11104:SF0">
    <property type="entry name" value="SPBETA PROPHAGE-DERIVED AMINOGLYCOSIDE N(3')-ACETYLTRANSFERASE-LIKE PROTEIN YOKD"/>
    <property type="match status" value="1"/>
</dbReference>
<dbReference type="Pfam" id="PF02522">
    <property type="entry name" value="Antibiotic_NAT"/>
    <property type="match status" value="1"/>
</dbReference>
<dbReference type="SUPFAM" id="SSF110710">
    <property type="entry name" value="TTHA0583/YokD-like"/>
    <property type="match status" value="1"/>
</dbReference>
<reference key="1">
    <citation type="journal article" date="1989" name="Antimicrob. Agents Chemother.">
        <title>Nucleotide sequence of the aacC2 gene, a gentamicin resistance determinant involved in a hospital epidemic of multiply resistant members of the family Enterobacteriaceae.</title>
        <authorList>
            <person name="Vliegenthart J.S."/>
            <person name="Ketelaar-Van Gaalen P.A.G."/>
            <person name="van de Klundert J.A.M."/>
        </authorList>
    </citation>
    <scope>NUCLEOTIDE SEQUENCE [GENOMIC DNA]</scope>
</reference>
<proteinExistence type="inferred from homology"/>
<gene>
    <name type="primary">aacC3</name>
    <name type="synonym">aac3-VA</name>
    <name type="synonym">aacC2</name>
</gene>